<gene>
    <name type="primary">rmuC</name>
    <name type="ordered locus">RBE_0502</name>
</gene>
<sequence>MNYLLPSAAIVLLVLVSLNIWFYIKVRTLKTELQFLTDQNLEITNNNQLLNQEKIAYLQKIEQLKCRVEYQEQSIKDSEKIRNESFSSAKAALFDLGKDLSKQLIEIHKMENTAARELAEKNIATASGKFNSEFERLITMVGTLNKDIEQSKSTVDLIKQSLLSPIGAGLLAEITLENILKSSGLRSNLDFIMQYGLTTSDSTKLRPDALIFLPSGNLMVIDSKASKFLVDEQDNSGNLSKTMNYHLKSLANKDYAENILADLNKKEQNYNNVITLMFLPTEQAVEKVIAADPNFLQKAWGCSIFPVGPSGLMNMLSFAKFQITDHRRSENYKIIIEEVRKLLSSIGTIADYSQKIGNNLHNMVTNYDKFAASFNRNFMSRVKNIQKLGIDSGNKTLPASLERYQIVSSKSEIIEVEAENSQPQQIEE</sequence>
<dbReference type="EMBL" id="CP000087">
    <property type="protein sequence ID" value="ABE04583.1"/>
    <property type="molecule type" value="Genomic_DNA"/>
</dbReference>
<dbReference type="RefSeq" id="WP_011477174.1">
    <property type="nucleotide sequence ID" value="NC_007940.1"/>
</dbReference>
<dbReference type="SMR" id="Q1RJ81"/>
<dbReference type="KEGG" id="rbe:RBE_0502"/>
<dbReference type="eggNOG" id="COG1322">
    <property type="taxonomic scope" value="Bacteria"/>
</dbReference>
<dbReference type="HOGENOM" id="CLU_640725_0_0_5"/>
<dbReference type="OrthoDB" id="370725at2"/>
<dbReference type="Proteomes" id="UP000001951">
    <property type="component" value="Chromosome"/>
</dbReference>
<dbReference type="GO" id="GO:0006310">
    <property type="term" value="P:DNA recombination"/>
    <property type="evidence" value="ECO:0007669"/>
    <property type="project" value="UniProtKB-KW"/>
</dbReference>
<dbReference type="InterPro" id="IPR003798">
    <property type="entry name" value="DNA_recombination_RmuC"/>
</dbReference>
<dbReference type="PANTHER" id="PTHR30563">
    <property type="entry name" value="DNA RECOMBINATION PROTEIN RMUC"/>
    <property type="match status" value="1"/>
</dbReference>
<dbReference type="PANTHER" id="PTHR30563:SF0">
    <property type="entry name" value="DNA RECOMBINATION PROTEIN RMUC"/>
    <property type="match status" value="1"/>
</dbReference>
<dbReference type="Pfam" id="PF02646">
    <property type="entry name" value="RmuC"/>
    <property type="match status" value="1"/>
</dbReference>
<organism>
    <name type="scientific">Rickettsia bellii (strain RML369-C)</name>
    <dbReference type="NCBI Taxonomy" id="336407"/>
    <lineage>
        <taxon>Bacteria</taxon>
        <taxon>Pseudomonadati</taxon>
        <taxon>Pseudomonadota</taxon>
        <taxon>Alphaproteobacteria</taxon>
        <taxon>Rickettsiales</taxon>
        <taxon>Rickettsiaceae</taxon>
        <taxon>Rickettsieae</taxon>
        <taxon>Rickettsia</taxon>
        <taxon>belli group</taxon>
    </lineage>
</organism>
<proteinExistence type="inferred from homology"/>
<name>RMUC_RICBR</name>
<keyword id="KW-0175">Coiled coil</keyword>
<keyword id="KW-0233">DNA recombination</keyword>
<protein>
    <recommendedName>
        <fullName>DNA recombination protein RmuC homolog</fullName>
    </recommendedName>
</protein>
<accession>Q1RJ81</accession>
<comment type="function">
    <text evidence="1">Involved in DNA recombination.</text>
</comment>
<comment type="similarity">
    <text evidence="3">Belongs to the RmuC family.</text>
</comment>
<reference key="1">
    <citation type="journal article" date="2006" name="PLoS Genet.">
        <title>Genome sequence of Rickettsia bellii illuminates the role of amoebae in gene exchanges between intracellular pathogens.</title>
        <authorList>
            <person name="Ogata H."/>
            <person name="La Scola B."/>
            <person name="Audic S."/>
            <person name="Renesto P."/>
            <person name="Blanc G."/>
            <person name="Robert C."/>
            <person name="Fournier P.-E."/>
            <person name="Claverie J.-M."/>
            <person name="Raoult D."/>
        </authorList>
    </citation>
    <scope>NUCLEOTIDE SEQUENCE [LARGE SCALE GENOMIC DNA]</scope>
    <source>
        <strain>RML369-C</strain>
    </source>
</reference>
<feature type="chain" id="PRO_0000286638" description="DNA recombination protein RmuC homolog">
    <location>
        <begin position="1"/>
        <end position="428"/>
    </location>
</feature>
<feature type="coiled-coil region" evidence="2">
    <location>
        <begin position="25"/>
        <end position="80"/>
    </location>
</feature>
<evidence type="ECO:0000250" key="1"/>
<evidence type="ECO:0000255" key="2"/>
<evidence type="ECO:0000305" key="3"/>